<accession>P06654</accession>
<dbReference type="EMBL" id="M13825">
    <property type="protein sequence ID" value="AAA03664.1"/>
    <property type="molecule type" value="Unassigned_DNA"/>
</dbReference>
<dbReference type="PIR" id="A24496">
    <property type="entry name" value="A24496"/>
</dbReference>
<dbReference type="PDB" id="1EM7">
    <property type="method" value="X-ray"/>
    <property type="resolution" value="2.00 A"/>
    <property type="chains" value="A=228-282"/>
</dbReference>
<dbReference type="PDB" id="1GB1">
    <property type="method" value="NMR"/>
    <property type="chains" value="A=228-282"/>
</dbReference>
<dbReference type="PDB" id="1IGC">
    <property type="method" value="X-ray"/>
    <property type="resolution" value="2.60 A"/>
    <property type="chains" value="A=293-352"/>
</dbReference>
<dbReference type="PDB" id="1IGD">
    <property type="method" value="X-ray"/>
    <property type="resolution" value="1.10 A"/>
    <property type="chains" value="A=293-352"/>
</dbReference>
<dbReference type="PDB" id="1LE3">
    <property type="method" value="NMR"/>
    <property type="chains" value="A=267-282"/>
</dbReference>
<dbReference type="PDB" id="1MPE">
    <property type="method" value="NMR"/>
    <property type="chains" value="A/B/C/D=228-282"/>
</dbReference>
<dbReference type="PDB" id="1MVK">
    <property type="method" value="X-ray"/>
    <property type="resolution" value="2.50 A"/>
    <property type="chains" value="A/B/C/D/E/F/G/H/I/J/K/L=228-282"/>
</dbReference>
<dbReference type="PDB" id="1PGA">
    <property type="method" value="X-ray"/>
    <property type="resolution" value="2.07 A"/>
    <property type="chains" value="A=228-282"/>
</dbReference>
<dbReference type="PDB" id="1PGB">
    <property type="method" value="X-ray"/>
    <property type="resolution" value="1.92 A"/>
    <property type="chains" value="A=228-282"/>
</dbReference>
<dbReference type="PDB" id="1PGX">
    <property type="method" value="X-ray"/>
    <property type="resolution" value="1.66 A"/>
    <property type="chains" value="A=288-369"/>
</dbReference>
<dbReference type="PDB" id="1PN5">
    <property type="method" value="NMR"/>
    <property type="chains" value="A=228-282"/>
</dbReference>
<dbReference type="PDB" id="1Q10">
    <property type="method" value="NMR"/>
    <property type="chains" value="A/B=228-282"/>
</dbReference>
<dbReference type="PDB" id="2GB1">
    <property type="method" value="NMR"/>
    <property type="chains" value="A=228-282"/>
</dbReference>
<dbReference type="PDB" id="2IGD">
    <property type="method" value="X-ray"/>
    <property type="resolution" value="1.10 A"/>
    <property type="chains" value="A=293-352"/>
</dbReference>
<dbReference type="PDB" id="2IGH">
    <property type="method" value="NMR"/>
    <property type="chains" value="A=292-352"/>
</dbReference>
<dbReference type="PDB" id="2J52">
    <property type="method" value="NMR"/>
    <property type="chains" value="A=228-282"/>
</dbReference>
<dbReference type="PDB" id="2J53">
    <property type="method" value="NMR"/>
    <property type="chains" value="A=228-282"/>
</dbReference>
<dbReference type="PDB" id="2K0P">
    <property type="method" value="NMR"/>
    <property type="chains" value="A=228-282"/>
</dbReference>
<dbReference type="PDB" id="2KBT">
    <property type="method" value="NMR"/>
    <property type="chains" value="A=228-282"/>
</dbReference>
<dbReference type="PDB" id="2KLK">
    <property type="method" value="Other"/>
    <property type="chains" value="A/B=229-282"/>
</dbReference>
<dbReference type="PDB" id="2LGI">
    <property type="method" value="NMR"/>
    <property type="chains" value="A=229-282"/>
</dbReference>
<dbReference type="PDB" id="2MBB">
    <property type="method" value="NMR"/>
    <property type="chains" value="A=229-282"/>
</dbReference>
<dbReference type="PDB" id="2N7J">
    <property type="method" value="NMR"/>
    <property type="chains" value="A=299-352"/>
</dbReference>
<dbReference type="PDB" id="2NMQ">
    <property type="method" value="NMR"/>
    <property type="chains" value="A=298-352"/>
</dbReference>
<dbReference type="PDB" id="2PLP">
    <property type="method" value="NMR"/>
    <property type="chains" value="A=228-281"/>
</dbReference>
<dbReference type="PDB" id="2RMM">
    <property type="method" value="NMR"/>
    <property type="chains" value="A/B=229-282"/>
</dbReference>
<dbReference type="PDB" id="2RPV">
    <property type="method" value="NMR"/>
    <property type="chains" value="A=226-282"/>
</dbReference>
<dbReference type="PDB" id="3GB1">
    <property type="method" value="NMR"/>
    <property type="chains" value="A=228-282"/>
</dbReference>
<dbReference type="PDB" id="3MP9">
    <property type="method" value="X-ray"/>
    <property type="resolution" value="1.20 A"/>
    <property type="chains" value="A/B=227-282"/>
</dbReference>
<dbReference type="PDB" id="4KGR">
    <property type="method" value="X-ray"/>
    <property type="resolution" value="2.00 A"/>
    <property type="chains" value="A/B/C/D/E/F/G/H=227-282"/>
</dbReference>
<dbReference type="PDB" id="4KGS">
    <property type="method" value="X-ray"/>
    <property type="resolution" value="1.95 A"/>
    <property type="chains" value="A/B=227-282"/>
</dbReference>
<dbReference type="PDB" id="4KGT">
    <property type="method" value="X-ray"/>
    <property type="resolution" value="2.00 A"/>
    <property type="chains" value="A/B=227-282"/>
</dbReference>
<dbReference type="PDB" id="6CNE">
    <property type="method" value="X-ray"/>
    <property type="resolution" value="1.20 A"/>
    <property type="chains" value="A/B=229-282"/>
</dbReference>
<dbReference type="PDB" id="6L91">
    <property type="method" value="X-ray"/>
    <property type="resolution" value="1.84 A"/>
    <property type="chains" value="A=227-282"/>
</dbReference>
<dbReference type="PDB" id="6L9B">
    <property type="method" value="X-ray"/>
    <property type="resolution" value="1.95 A"/>
    <property type="chains" value="A=227-282"/>
</dbReference>
<dbReference type="PDB" id="6L9D">
    <property type="method" value="X-ray"/>
    <property type="resolution" value="1.73 A"/>
    <property type="chains" value="A=227-282"/>
</dbReference>
<dbReference type="PDB" id="6LJI">
    <property type="method" value="X-ray"/>
    <property type="resolution" value="1.84 A"/>
    <property type="chains" value="A/B=227-282"/>
</dbReference>
<dbReference type="PDB" id="6V9I">
    <property type="method" value="EM"/>
    <property type="resolution" value="5.20 A"/>
    <property type="chains" value="C=229-282"/>
</dbReference>
<dbReference type="PDB" id="7QTR">
    <property type="method" value="NMR"/>
    <property type="chains" value="A=229-282"/>
</dbReference>
<dbReference type="PDB" id="7QTS">
    <property type="method" value="NMR"/>
    <property type="chains" value="A=229-282"/>
</dbReference>
<dbReference type="PDB" id="7RXC">
    <property type="method" value="EM"/>
    <property type="resolution" value="3.20 A"/>
    <property type="chains" value="B=295-352"/>
</dbReference>
<dbReference type="PDB" id="7RXD">
    <property type="method" value="EM"/>
    <property type="resolution" value="3.60 A"/>
    <property type="chains" value="B=295-352"/>
</dbReference>
<dbReference type="PDB" id="8T0G">
    <property type="method" value="NMR"/>
    <property type="chains" value="A=267-282"/>
</dbReference>
<dbReference type="PDB" id="9BDT">
    <property type="method" value="EM"/>
    <property type="resolution" value="5.40 A"/>
    <property type="chains" value="B=295-352"/>
</dbReference>
<dbReference type="PDB" id="9COO">
    <property type="method" value="EM"/>
    <property type="resolution" value="3.73 A"/>
    <property type="chains" value="B=295-352"/>
</dbReference>
<dbReference type="PDB" id="9JA5">
    <property type="method" value="EM"/>
    <property type="resolution" value="2.70 A"/>
    <property type="chains" value="A/B/C/D/E/F=228-282"/>
</dbReference>
<dbReference type="PDB" id="9JA6">
    <property type="method" value="EM"/>
    <property type="resolution" value="4.40 A"/>
    <property type="chains" value="A/B/C/D=228-282"/>
</dbReference>
<dbReference type="PDBsum" id="1EM7"/>
<dbReference type="PDBsum" id="1GB1"/>
<dbReference type="PDBsum" id="1IGC"/>
<dbReference type="PDBsum" id="1IGD"/>
<dbReference type="PDBsum" id="1LE3"/>
<dbReference type="PDBsum" id="1MPE"/>
<dbReference type="PDBsum" id="1MVK"/>
<dbReference type="PDBsum" id="1PGA"/>
<dbReference type="PDBsum" id="1PGB"/>
<dbReference type="PDBsum" id="1PGX"/>
<dbReference type="PDBsum" id="1PN5"/>
<dbReference type="PDBsum" id="1Q10"/>
<dbReference type="PDBsum" id="2GB1"/>
<dbReference type="PDBsum" id="2IGD"/>
<dbReference type="PDBsum" id="2IGH"/>
<dbReference type="PDBsum" id="2J52"/>
<dbReference type="PDBsum" id="2J53"/>
<dbReference type="PDBsum" id="2K0P"/>
<dbReference type="PDBsum" id="2KBT"/>
<dbReference type="PDBsum" id="2KLK"/>
<dbReference type="PDBsum" id="2LGI"/>
<dbReference type="PDBsum" id="2MBB"/>
<dbReference type="PDBsum" id="2N7J"/>
<dbReference type="PDBsum" id="2NMQ"/>
<dbReference type="PDBsum" id="2PLP"/>
<dbReference type="PDBsum" id="2RMM"/>
<dbReference type="PDBsum" id="2RPV"/>
<dbReference type="PDBsum" id="3GB1"/>
<dbReference type="PDBsum" id="3MP9"/>
<dbReference type="PDBsum" id="4KGR"/>
<dbReference type="PDBsum" id="4KGS"/>
<dbReference type="PDBsum" id="4KGT"/>
<dbReference type="PDBsum" id="6CNE"/>
<dbReference type="PDBsum" id="6L91"/>
<dbReference type="PDBsum" id="6L9B"/>
<dbReference type="PDBsum" id="6L9D"/>
<dbReference type="PDBsum" id="6LJI"/>
<dbReference type="PDBsum" id="6V9I"/>
<dbReference type="PDBsum" id="7QTR"/>
<dbReference type="PDBsum" id="7QTS"/>
<dbReference type="PDBsum" id="7RXC"/>
<dbReference type="PDBsum" id="7RXD"/>
<dbReference type="PDBsum" id="8T0G"/>
<dbReference type="PDBsum" id="9BDT"/>
<dbReference type="PDBsum" id="9COO"/>
<dbReference type="PDBsum" id="9JA5"/>
<dbReference type="PDBsum" id="9JA6"/>
<dbReference type="BMRB" id="P06654"/>
<dbReference type="EMDB" id="EMD-24728"/>
<dbReference type="EMDB" id="EMD-24729"/>
<dbReference type="EMDB" id="EMD-36710"/>
<dbReference type="EMDB" id="EMD-36711"/>
<dbReference type="EMDB" id="EMD-44469"/>
<dbReference type="EMDB" id="EMD-45787"/>
<dbReference type="EMDB" id="EMD-61290"/>
<dbReference type="EMDB" id="EMD-61291"/>
<dbReference type="SMR" id="P06654"/>
<dbReference type="EvolutionaryTrace" id="P06654"/>
<dbReference type="GO" id="GO:0005576">
    <property type="term" value="C:extracellular region"/>
    <property type="evidence" value="ECO:0007669"/>
    <property type="project" value="UniProtKB-KW"/>
</dbReference>
<dbReference type="GO" id="GO:0019864">
    <property type="term" value="F:IgG binding"/>
    <property type="evidence" value="ECO:0007669"/>
    <property type="project" value="UniProtKB-KW"/>
</dbReference>
<dbReference type="Gene3D" id="3.10.20.10">
    <property type="match status" value="2"/>
</dbReference>
<dbReference type="Gene3D" id="1.10.8.40">
    <property type="entry name" value="Albumin-binding domain"/>
    <property type="match status" value="2"/>
</dbReference>
<dbReference type="InterPro" id="IPR035152">
    <property type="entry name" value="GA-like"/>
</dbReference>
<dbReference type="InterPro" id="IPR009063">
    <property type="entry name" value="Ig/albumin-bd_sf"/>
</dbReference>
<dbReference type="InterPro" id="IPR000724">
    <property type="entry name" value="IgG-bd_B"/>
</dbReference>
<dbReference type="InterPro" id="IPR019931">
    <property type="entry name" value="LPXTG_anchor"/>
</dbReference>
<dbReference type="InterPro" id="IPR019950">
    <property type="entry name" value="M_anchor"/>
</dbReference>
<dbReference type="InterPro" id="IPR005877">
    <property type="entry name" value="YSIRK_signal_dom"/>
</dbReference>
<dbReference type="NCBIfam" id="TIGR01167">
    <property type="entry name" value="LPXTG_anchor"/>
    <property type="match status" value="1"/>
</dbReference>
<dbReference type="NCBIfam" id="TIGR01168">
    <property type="entry name" value="YSIRK_signal"/>
    <property type="match status" value="1"/>
</dbReference>
<dbReference type="Pfam" id="PF17573">
    <property type="entry name" value="GA-like"/>
    <property type="match status" value="2"/>
</dbReference>
<dbReference type="Pfam" id="PF00746">
    <property type="entry name" value="Gram_pos_anchor"/>
    <property type="match status" value="1"/>
</dbReference>
<dbReference type="Pfam" id="PF01378">
    <property type="entry name" value="IgG_binding_B"/>
    <property type="match status" value="2"/>
</dbReference>
<dbReference type="PRINTS" id="PR00015">
    <property type="entry name" value="GPOSANCHOR"/>
</dbReference>
<dbReference type="SUPFAM" id="SSF46997">
    <property type="entry name" value="Bacterial immunoglobulin/albumin-binding domains"/>
    <property type="match status" value="2"/>
</dbReference>
<dbReference type="SUPFAM" id="SSF54358">
    <property type="entry name" value="Immunoglobulin-binding domains"/>
    <property type="match status" value="2"/>
</dbReference>
<dbReference type="PROSITE" id="PS50847">
    <property type="entry name" value="GRAM_POS_ANCHORING"/>
    <property type="match status" value="1"/>
</dbReference>
<comment type="function">
    <text>Binds to the constant Fc region of IgG with high affinity.</text>
</comment>
<comment type="subcellular location">
    <subcellularLocation>
        <location evidence="1">Secreted</location>
        <location evidence="1">Cell wall</location>
        <topology evidence="1">Peptidoglycan-anchor</topology>
    </subcellularLocation>
</comment>
<proteinExistence type="evidence at protein level"/>
<sequence length="448" mass="47567">MEKEKKVKYFLRKSAFGLASVSAAFLVGSTVFAVDSPIEDTPIIRNGGELTNLLGNSETTLALRNEESATADLTAAAVADTVAAAAAENAGAAAWEAAAAADALAKAKADALKEFNKYGVSDYYKNLINNAKTVEGIKDLQAQVVESAKKARISEATDGLSDFLKSQTPAEDTVKSIELAEAKVLANRELDKYGVSDYHKNLINNAKTVEGVKELIDEILAALPKTDTYKLILNGKTLKGETTTEAVDAATAEKVFKQYANDNGVDGEWTYDDATKTFTVTEKPEVIDASELTPAVTTYKLVINGKTLKGETTTKAVDAETAEKAFKQYANDNGVDGVWTYDDATKTFTVTEMVTEVPGDAPTEPEKPEASIPLVPLTPATPIAKDDAKKDDTKKEDAKKPEAKKDDAKKAETLPTTGEGSNPFFTAAALAVMAGAGALAVASKRKED</sequence>
<organism>
    <name type="scientific">Streptococcus sp. group G</name>
    <dbReference type="NCBI Taxonomy" id="1320"/>
    <lineage>
        <taxon>Bacteria</taxon>
        <taxon>Bacillati</taxon>
        <taxon>Bacillota</taxon>
        <taxon>Bacilli</taxon>
        <taxon>Lactobacillales</taxon>
        <taxon>Streptococcaceae</taxon>
        <taxon>Streptococcus</taxon>
    </lineage>
</organism>
<gene>
    <name type="primary">spg</name>
</gene>
<reference key="1">
    <citation type="journal article" date="1986" name="J. Bacteriol.">
        <title>Gene for an immunoglobulin-binding protein from a group G streptococcus.</title>
        <authorList>
            <person name="Fahnestock S.R."/>
            <person name="Alexander P."/>
            <person name="Nagle J."/>
            <person name="Filpula D."/>
        </authorList>
    </citation>
    <scope>NUCLEOTIDE SEQUENCE [GENOMIC DNA]</scope>
</reference>
<reference key="2">
    <citation type="journal article" date="1991" name="J. Biol. Chem.">
        <title>Streptococcal protein G. Gene structure and protein binding properties.</title>
        <authorList>
            <person name="Sjoebring U."/>
            <person name="Bjoerck L."/>
            <person name="Kastern W."/>
        </authorList>
    </citation>
    <scope>PROTEIN SEQUENCE OF 34-48; 62-77 AND 187-200</scope>
</reference>
<reference key="3">
    <citation type="journal article" date="1994" name="Biochemistry">
        <title>Two crystal structures of the B1 immunoglobulin-binding domain of streptococcal protein G and comparison with NMR.</title>
        <authorList>
            <person name="Gallagher T."/>
            <person name="Alexander P."/>
            <person name="Bryan P."/>
            <person name="Gilliland G.L."/>
        </authorList>
    </citation>
    <scope>X-RAY CRYSTALLOGRAPHY (2.07 ANGSTROMS) OF 228-282</scope>
</reference>
<reference key="4">
    <citation type="journal article" date="1994" name="J. Mol. Biol.">
        <title>The third IgG-binding domain from streptococcal protein G. An analysis by X-ray crystallography of the structure alone and in a complex with Fab.</title>
        <authorList>
            <person name="Derrick J.P."/>
            <person name="Wigley D.B."/>
        </authorList>
    </citation>
    <scope>X-RAY CRYSTALLOGRAPHY (1.1 ANGSTROMS) OF 293-351</scope>
</reference>
<reference key="5">
    <citation type="journal article" date="1995" name="Structure">
        <title>Crystal structure of the C2 fragment of streptococcal protein G in complex with the Fc domain of human IgG.</title>
        <authorList>
            <person name="Sauer-Eriksson A.E."/>
            <person name="Kleywegt G.J."/>
            <person name="Uhlen M."/>
            <person name="Jones T.A."/>
        </authorList>
    </citation>
    <scope>X-RAY CRYSTALLOGRAPHY (3.5 ANGSTROMS) OF 297-352</scope>
</reference>
<reference key="6">
    <citation type="submission" date="1997-04" db="PDB data bank">
        <authorList>
            <person name="Butterworth S."/>
            <person name="Lamzin V.S."/>
            <person name="Wigley D.B."/>
            <person name="Derrick J.P."/>
            <person name="Wilson K.S."/>
        </authorList>
    </citation>
    <scope>X-RAY CRYSTALLOGRAPHY (1.1 ANGSTROMS) OF 228-282</scope>
</reference>
<reference key="7">
    <citation type="journal article" date="1991" name="Science">
        <title>A novel, highly stable fold of the immunoglobulin binding domain of streptococcal protein G.</title>
        <authorList>
            <person name="Gronenborn A.M."/>
            <person name="Filpula D.R."/>
            <person name="Essig N.Z."/>
            <person name="Achari A."/>
            <person name="Whitlow M."/>
            <person name="Wingfield P.T."/>
            <person name="Clore G.M."/>
        </authorList>
    </citation>
    <scope>STRUCTURE BY NMR OF 298-351</scope>
</reference>
<keyword id="KW-0002">3D-structure</keyword>
<keyword id="KW-0134">Cell wall</keyword>
<keyword id="KW-0903">Direct protein sequencing</keyword>
<keyword id="KW-0390">IgG-binding protein</keyword>
<keyword id="KW-0572">Peptidoglycan-anchor</keyword>
<keyword id="KW-0677">Repeat</keyword>
<keyword id="KW-0964">Secreted</keyword>
<keyword id="KW-0732">Signal</keyword>
<name>SPG1_STRSG</name>
<protein>
    <recommendedName>
        <fullName>Immunoglobulin G-binding protein G</fullName>
        <shortName>IgG-binding protein G</shortName>
    </recommendedName>
</protein>
<evidence type="ECO:0000255" key="1">
    <source>
        <dbReference type="PROSITE-ProRule" id="PRU00477"/>
    </source>
</evidence>
<evidence type="ECO:0000256" key="2">
    <source>
        <dbReference type="SAM" id="MobiDB-lite"/>
    </source>
</evidence>
<evidence type="ECO:0000269" key="3">
    <source>
    </source>
</evidence>
<evidence type="ECO:0000305" key="4"/>
<evidence type="ECO:0007829" key="5">
    <source>
        <dbReference type="PDB" id="1IGD"/>
    </source>
</evidence>
<evidence type="ECO:0007829" key="6">
    <source>
        <dbReference type="PDB" id="1Q10"/>
    </source>
</evidence>
<evidence type="ECO:0007829" key="7">
    <source>
        <dbReference type="PDB" id="3MP9"/>
    </source>
</evidence>
<feature type="signal peptide" evidence="3">
    <location>
        <begin position="1"/>
        <end position="33"/>
    </location>
</feature>
<feature type="chain" id="PRO_0000005657" description="Immunoglobulin G-binding protein G">
    <location>
        <begin position="34"/>
        <end position="417"/>
    </location>
</feature>
<feature type="propeptide" id="PRO_0000005658" description="Removed by sortase" evidence="1">
    <location>
        <begin position="418"/>
        <end position="448"/>
    </location>
</feature>
<feature type="repeat" description="1-1">
    <location>
        <begin position="104"/>
        <end position="140"/>
    </location>
</feature>
<feature type="repeat" description="1-2">
    <location>
        <begin position="179"/>
        <end position="215"/>
    </location>
</feature>
<feature type="repeat" description="2-1">
    <location>
        <begin position="228"/>
        <end position="282"/>
    </location>
</feature>
<feature type="repeat" description="2-2">
    <location>
        <begin position="298"/>
        <end position="352"/>
    </location>
</feature>
<feature type="region of interest" description="2 X 37 AA repeats">
    <location>
        <begin position="104"/>
        <end position="215"/>
    </location>
</feature>
<feature type="region of interest" description="2 X 55 AA repeats">
    <location>
        <begin position="228"/>
        <end position="352"/>
    </location>
</feature>
<feature type="region of interest" description="Disordered" evidence="2">
    <location>
        <begin position="358"/>
        <end position="422"/>
    </location>
</feature>
<feature type="region of interest" description="5 X 5 AA repeats of [DE]-D-A-K-K">
    <location>
        <begin position="386"/>
        <end position="410"/>
    </location>
</feature>
<feature type="short sequence motif" description="LPXTG sorting signal" evidence="1">
    <location>
        <begin position="414"/>
        <end position="418"/>
    </location>
</feature>
<feature type="compositionally biased region" description="Basic and acidic residues" evidence="2">
    <location>
        <begin position="384"/>
        <end position="412"/>
    </location>
</feature>
<feature type="modified residue" description="Pentaglycyl murein peptidoglycan amidated threonine" evidence="1">
    <location>
        <position position="417"/>
    </location>
</feature>
<feature type="sequence conflict" description="In Ref. 2; AA sequence." evidence="4" ref="2">
    <original>II</original>
    <variation>N</variation>
    <location>
        <begin position="43"/>
        <end position="44"/>
    </location>
</feature>
<feature type="strand" evidence="7">
    <location>
        <begin position="227"/>
        <end position="234"/>
    </location>
</feature>
<feature type="strand" evidence="7">
    <location>
        <begin position="239"/>
        <end position="248"/>
    </location>
</feature>
<feature type="helix" evidence="7">
    <location>
        <begin position="249"/>
        <end position="262"/>
    </location>
</feature>
<feature type="turn" evidence="6">
    <location>
        <begin position="264"/>
        <end position="266"/>
    </location>
</feature>
<feature type="strand" evidence="7">
    <location>
        <begin position="268"/>
        <end position="272"/>
    </location>
</feature>
<feature type="turn" evidence="7">
    <location>
        <begin position="273"/>
        <end position="276"/>
    </location>
</feature>
<feature type="strand" evidence="7">
    <location>
        <begin position="277"/>
        <end position="281"/>
    </location>
</feature>
<feature type="strand" evidence="5">
    <location>
        <begin position="297"/>
        <end position="304"/>
    </location>
</feature>
<feature type="strand" evidence="5">
    <location>
        <begin position="309"/>
        <end position="318"/>
    </location>
</feature>
<feature type="helix" evidence="5">
    <location>
        <begin position="319"/>
        <end position="332"/>
    </location>
</feature>
<feature type="strand" evidence="5">
    <location>
        <begin position="338"/>
        <end position="342"/>
    </location>
</feature>
<feature type="turn" evidence="5">
    <location>
        <begin position="343"/>
        <end position="346"/>
    </location>
</feature>
<feature type="strand" evidence="5">
    <location>
        <begin position="347"/>
        <end position="351"/>
    </location>
</feature>